<accession>A8ERX9</accession>
<dbReference type="EC" id="4.1.1.11" evidence="1"/>
<dbReference type="EMBL" id="CP000361">
    <property type="protein sequence ID" value="ABV66703.1"/>
    <property type="molecule type" value="Genomic_DNA"/>
</dbReference>
<dbReference type="RefSeq" id="WP_004510492.1">
    <property type="nucleotide sequence ID" value="NC_009850.1"/>
</dbReference>
<dbReference type="SMR" id="A8ERX9"/>
<dbReference type="STRING" id="367737.Abu_0428"/>
<dbReference type="GeneID" id="24305177"/>
<dbReference type="KEGG" id="abu:Abu_0428"/>
<dbReference type="eggNOG" id="COG0853">
    <property type="taxonomic scope" value="Bacteria"/>
</dbReference>
<dbReference type="HOGENOM" id="CLU_115305_2_0_7"/>
<dbReference type="UniPathway" id="UPA00028">
    <property type="reaction ID" value="UER00002"/>
</dbReference>
<dbReference type="Proteomes" id="UP000001136">
    <property type="component" value="Chromosome"/>
</dbReference>
<dbReference type="GO" id="GO:0005829">
    <property type="term" value="C:cytosol"/>
    <property type="evidence" value="ECO:0007669"/>
    <property type="project" value="TreeGrafter"/>
</dbReference>
<dbReference type="GO" id="GO:0004068">
    <property type="term" value="F:aspartate 1-decarboxylase activity"/>
    <property type="evidence" value="ECO:0007669"/>
    <property type="project" value="UniProtKB-UniRule"/>
</dbReference>
<dbReference type="GO" id="GO:0006523">
    <property type="term" value="P:alanine biosynthetic process"/>
    <property type="evidence" value="ECO:0007669"/>
    <property type="project" value="InterPro"/>
</dbReference>
<dbReference type="GO" id="GO:0015940">
    <property type="term" value="P:pantothenate biosynthetic process"/>
    <property type="evidence" value="ECO:0007669"/>
    <property type="project" value="UniProtKB-UniRule"/>
</dbReference>
<dbReference type="CDD" id="cd06919">
    <property type="entry name" value="Asp_decarbox"/>
    <property type="match status" value="1"/>
</dbReference>
<dbReference type="Gene3D" id="2.40.40.20">
    <property type="match status" value="1"/>
</dbReference>
<dbReference type="HAMAP" id="MF_00446">
    <property type="entry name" value="PanD"/>
    <property type="match status" value="1"/>
</dbReference>
<dbReference type="InterPro" id="IPR009010">
    <property type="entry name" value="Asp_de-COase-like_dom_sf"/>
</dbReference>
<dbReference type="InterPro" id="IPR003190">
    <property type="entry name" value="Asp_decarbox"/>
</dbReference>
<dbReference type="NCBIfam" id="TIGR00223">
    <property type="entry name" value="panD"/>
    <property type="match status" value="1"/>
</dbReference>
<dbReference type="PANTHER" id="PTHR21012">
    <property type="entry name" value="ASPARTATE 1-DECARBOXYLASE"/>
    <property type="match status" value="1"/>
</dbReference>
<dbReference type="PANTHER" id="PTHR21012:SF0">
    <property type="entry name" value="ASPARTATE 1-DECARBOXYLASE"/>
    <property type="match status" value="1"/>
</dbReference>
<dbReference type="Pfam" id="PF02261">
    <property type="entry name" value="Asp_decarbox"/>
    <property type="match status" value="1"/>
</dbReference>
<dbReference type="PIRSF" id="PIRSF006246">
    <property type="entry name" value="Asp_decarbox"/>
    <property type="match status" value="1"/>
</dbReference>
<dbReference type="SUPFAM" id="SSF50692">
    <property type="entry name" value="ADC-like"/>
    <property type="match status" value="1"/>
</dbReference>
<keyword id="KW-0068">Autocatalytic cleavage</keyword>
<keyword id="KW-0963">Cytoplasm</keyword>
<keyword id="KW-0210">Decarboxylase</keyword>
<keyword id="KW-0456">Lyase</keyword>
<keyword id="KW-0566">Pantothenate biosynthesis</keyword>
<keyword id="KW-0670">Pyruvate</keyword>
<keyword id="KW-1185">Reference proteome</keyword>
<keyword id="KW-0704">Schiff base</keyword>
<keyword id="KW-0865">Zymogen</keyword>
<organism>
    <name type="scientific">Aliarcobacter butzleri (strain RM4018)</name>
    <name type="common">Arcobacter butzleri</name>
    <dbReference type="NCBI Taxonomy" id="367737"/>
    <lineage>
        <taxon>Bacteria</taxon>
        <taxon>Pseudomonadati</taxon>
        <taxon>Campylobacterota</taxon>
        <taxon>Epsilonproteobacteria</taxon>
        <taxon>Campylobacterales</taxon>
        <taxon>Arcobacteraceae</taxon>
        <taxon>Aliarcobacter</taxon>
    </lineage>
</organism>
<proteinExistence type="inferred from homology"/>
<comment type="function">
    <text evidence="1">Catalyzes the pyruvoyl-dependent decarboxylation of aspartate to produce beta-alanine.</text>
</comment>
<comment type="catalytic activity">
    <reaction evidence="1">
        <text>L-aspartate + H(+) = beta-alanine + CO2</text>
        <dbReference type="Rhea" id="RHEA:19497"/>
        <dbReference type="ChEBI" id="CHEBI:15378"/>
        <dbReference type="ChEBI" id="CHEBI:16526"/>
        <dbReference type="ChEBI" id="CHEBI:29991"/>
        <dbReference type="ChEBI" id="CHEBI:57966"/>
        <dbReference type="EC" id="4.1.1.11"/>
    </reaction>
</comment>
<comment type="cofactor">
    <cofactor evidence="1">
        <name>pyruvate</name>
        <dbReference type="ChEBI" id="CHEBI:15361"/>
    </cofactor>
    <text evidence="1">Binds 1 pyruvoyl group covalently per subunit.</text>
</comment>
<comment type="pathway">
    <text evidence="1">Cofactor biosynthesis; (R)-pantothenate biosynthesis; beta-alanine from L-aspartate: step 1/1.</text>
</comment>
<comment type="subunit">
    <text evidence="1">Heterooctamer of four alpha and four beta subunits.</text>
</comment>
<comment type="subcellular location">
    <subcellularLocation>
        <location evidence="1">Cytoplasm</location>
    </subcellularLocation>
</comment>
<comment type="PTM">
    <text evidence="1">Is synthesized initially as an inactive proenzyme, which is activated by self-cleavage at a specific serine bond to produce a beta-subunit with a hydroxyl group at its C-terminus and an alpha-subunit with a pyruvoyl group at its N-terminus.</text>
</comment>
<comment type="similarity">
    <text evidence="1">Belongs to the PanD family.</text>
</comment>
<reference key="1">
    <citation type="journal article" date="2007" name="PLoS ONE">
        <title>The complete genome sequence and analysis of the Epsilonproteobacterium Arcobacter butzleri.</title>
        <authorList>
            <person name="Miller W.G."/>
            <person name="Parker C.T."/>
            <person name="Rubenfield M."/>
            <person name="Mendz G.L."/>
            <person name="Woesten M.M.S.M."/>
            <person name="Ussery D.W."/>
            <person name="Stolz J.F."/>
            <person name="Binnewies T.T."/>
            <person name="Hallin P.F."/>
            <person name="Wang G."/>
            <person name="Malek J.A."/>
            <person name="Rogosin A."/>
            <person name="Stanker L.H."/>
            <person name="Mandrell R.E."/>
        </authorList>
    </citation>
    <scope>NUCLEOTIDE SEQUENCE [LARGE SCALE GENOMIC DNA]</scope>
    <source>
        <strain>RM4018</strain>
    </source>
</reference>
<sequence length="127" mass="14100">MTFEMLYSKIHRATVSDANLNYVGSITIDEDLMKAANLRVGQKVDIVNINNGERFQTYIIKGKAGSKDMCLNGAAARKVEIGDKIIVIAYATFSEAELENYKPTVVLVDDKNNIELITHELEGGKYV</sequence>
<feature type="chain" id="PRO_1000060264" description="Aspartate 1-decarboxylase beta chain" evidence="1">
    <location>
        <begin position="1"/>
        <end position="24"/>
    </location>
</feature>
<feature type="chain" id="PRO_1000060265" description="Aspartate 1-decarboxylase alpha chain" evidence="1">
    <location>
        <begin position="25"/>
        <end position="127"/>
    </location>
</feature>
<feature type="active site" description="Schiff-base intermediate with substrate; via pyruvic acid" evidence="1">
    <location>
        <position position="25"/>
    </location>
</feature>
<feature type="active site" description="Proton donor" evidence="1">
    <location>
        <position position="58"/>
    </location>
</feature>
<feature type="binding site" evidence="1">
    <location>
        <position position="57"/>
    </location>
    <ligand>
        <name>substrate</name>
    </ligand>
</feature>
<feature type="binding site" evidence="1">
    <location>
        <begin position="73"/>
        <end position="75"/>
    </location>
    <ligand>
        <name>substrate</name>
    </ligand>
</feature>
<feature type="modified residue" description="Pyruvic acid (Ser)" evidence="1">
    <location>
        <position position="25"/>
    </location>
</feature>
<protein>
    <recommendedName>
        <fullName evidence="1">Aspartate 1-decarboxylase</fullName>
        <ecNumber evidence="1">4.1.1.11</ecNumber>
    </recommendedName>
    <alternativeName>
        <fullName evidence="1">Aspartate alpha-decarboxylase</fullName>
    </alternativeName>
    <component>
        <recommendedName>
            <fullName evidence="1">Aspartate 1-decarboxylase beta chain</fullName>
        </recommendedName>
    </component>
    <component>
        <recommendedName>
            <fullName evidence="1">Aspartate 1-decarboxylase alpha chain</fullName>
        </recommendedName>
    </component>
</protein>
<name>PAND_ALIB4</name>
<evidence type="ECO:0000255" key="1">
    <source>
        <dbReference type="HAMAP-Rule" id="MF_00446"/>
    </source>
</evidence>
<gene>
    <name evidence="1" type="primary">panD</name>
    <name type="ordered locus">Abu_0428</name>
</gene>